<comment type="function">
    <text>May be involved in transcriptional regulation.</text>
</comment>
<comment type="interaction">
    <interactant intactId="EBI-3923453">
        <id>Q8TC21</id>
    </interactant>
    <interactant intactId="EBI-357793">
        <id>P60900</id>
        <label>PSMA6</label>
    </interactant>
    <organismsDiffer>false</organismsDiffer>
    <experiments>3</experiments>
</comment>
<comment type="subcellular location">
    <subcellularLocation>
        <location evidence="4">Nucleus</location>
    </subcellularLocation>
</comment>
<comment type="alternative products">
    <event type="alternative splicing"/>
    <isoform>
        <id>Q8TC21-1</id>
        <name>1</name>
        <sequence type="displayed"/>
    </isoform>
    <isoform>
        <id>Q8TC21-2</id>
        <name>2</name>
        <sequence type="described" ref="VSP_019802"/>
    </isoform>
    <isoform>
        <id>Q8TC21-3</id>
        <name>3</name>
        <sequence type="described" ref="VSP_019801 VSP_019803 VSP_019804"/>
    </isoform>
</comment>
<comment type="similarity">
    <text evidence="4">Belongs to the krueppel C2H2-type zinc-finger protein family.</text>
</comment>
<comment type="sequence caution" evidence="4">
    <conflict type="erroneous gene model prediction">
        <sequence resource="EMBL-CDS" id="AAD05197"/>
    </conflict>
</comment>
<comment type="sequence caution" evidence="4">
    <conflict type="erroneous initiation">
        <sequence resource="EMBL-CDS" id="BAG36241"/>
    </conflict>
</comment>
<name>ZN596_HUMAN</name>
<reference key="1">
    <citation type="journal article" date="2004" name="Nat. Genet.">
        <title>Complete sequencing and characterization of 21,243 full-length human cDNAs.</title>
        <authorList>
            <person name="Ota T."/>
            <person name="Suzuki Y."/>
            <person name="Nishikawa T."/>
            <person name="Otsuki T."/>
            <person name="Sugiyama T."/>
            <person name="Irie R."/>
            <person name="Wakamatsu A."/>
            <person name="Hayashi K."/>
            <person name="Sato H."/>
            <person name="Nagai K."/>
            <person name="Kimura K."/>
            <person name="Makita H."/>
            <person name="Sekine M."/>
            <person name="Obayashi M."/>
            <person name="Nishi T."/>
            <person name="Shibahara T."/>
            <person name="Tanaka T."/>
            <person name="Ishii S."/>
            <person name="Yamamoto J."/>
            <person name="Saito K."/>
            <person name="Kawai Y."/>
            <person name="Isono Y."/>
            <person name="Nakamura Y."/>
            <person name="Nagahari K."/>
            <person name="Murakami K."/>
            <person name="Yasuda T."/>
            <person name="Iwayanagi T."/>
            <person name="Wagatsuma M."/>
            <person name="Shiratori A."/>
            <person name="Sudo H."/>
            <person name="Hosoiri T."/>
            <person name="Kaku Y."/>
            <person name="Kodaira H."/>
            <person name="Kondo H."/>
            <person name="Sugawara M."/>
            <person name="Takahashi M."/>
            <person name="Kanda K."/>
            <person name="Yokoi T."/>
            <person name="Furuya T."/>
            <person name="Kikkawa E."/>
            <person name="Omura Y."/>
            <person name="Abe K."/>
            <person name="Kamihara K."/>
            <person name="Katsuta N."/>
            <person name="Sato K."/>
            <person name="Tanikawa M."/>
            <person name="Yamazaki M."/>
            <person name="Ninomiya K."/>
            <person name="Ishibashi T."/>
            <person name="Yamashita H."/>
            <person name="Murakawa K."/>
            <person name="Fujimori K."/>
            <person name="Tanai H."/>
            <person name="Kimata M."/>
            <person name="Watanabe M."/>
            <person name="Hiraoka S."/>
            <person name="Chiba Y."/>
            <person name="Ishida S."/>
            <person name="Ono Y."/>
            <person name="Takiguchi S."/>
            <person name="Watanabe S."/>
            <person name="Yosida M."/>
            <person name="Hotuta T."/>
            <person name="Kusano J."/>
            <person name="Kanehori K."/>
            <person name="Takahashi-Fujii A."/>
            <person name="Hara H."/>
            <person name="Tanase T.-O."/>
            <person name="Nomura Y."/>
            <person name="Togiya S."/>
            <person name="Komai F."/>
            <person name="Hara R."/>
            <person name="Takeuchi K."/>
            <person name="Arita M."/>
            <person name="Imose N."/>
            <person name="Musashino K."/>
            <person name="Yuuki H."/>
            <person name="Oshima A."/>
            <person name="Sasaki N."/>
            <person name="Aotsuka S."/>
            <person name="Yoshikawa Y."/>
            <person name="Matsunawa H."/>
            <person name="Ichihara T."/>
            <person name="Shiohata N."/>
            <person name="Sano S."/>
            <person name="Moriya S."/>
            <person name="Momiyama H."/>
            <person name="Satoh N."/>
            <person name="Takami S."/>
            <person name="Terashima Y."/>
            <person name="Suzuki O."/>
            <person name="Nakagawa S."/>
            <person name="Senoh A."/>
            <person name="Mizoguchi H."/>
            <person name="Goto Y."/>
            <person name="Shimizu F."/>
            <person name="Wakebe H."/>
            <person name="Hishigaki H."/>
            <person name="Watanabe T."/>
            <person name="Sugiyama A."/>
            <person name="Takemoto M."/>
            <person name="Kawakami B."/>
            <person name="Yamazaki M."/>
            <person name="Watanabe K."/>
            <person name="Kumagai A."/>
            <person name="Itakura S."/>
            <person name="Fukuzumi Y."/>
            <person name="Fujimori Y."/>
            <person name="Komiyama M."/>
            <person name="Tashiro H."/>
            <person name="Tanigami A."/>
            <person name="Fujiwara T."/>
            <person name="Ono T."/>
            <person name="Yamada K."/>
            <person name="Fujii Y."/>
            <person name="Ozaki K."/>
            <person name="Hirao M."/>
            <person name="Ohmori Y."/>
            <person name="Kawabata A."/>
            <person name="Hikiji T."/>
            <person name="Kobatake N."/>
            <person name="Inagaki H."/>
            <person name="Ikema Y."/>
            <person name="Okamoto S."/>
            <person name="Okitani R."/>
            <person name="Kawakami T."/>
            <person name="Noguchi S."/>
            <person name="Itoh T."/>
            <person name="Shigeta K."/>
            <person name="Senba T."/>
            <person name="Matsumura K."/>
            <person name="Nakajima Y."/>
            <person name="Mizuno T."/>
            <person name="Morinaga M."/>
            <person name="Sasaki M."/>
            <person name="Togashi T."/>
            <person name="Oyama M."/>
            <person name="Hata H."/>
            <person name="Watanabe M."/>
            <person name="Komatsu T."/>
            <person name="Mizushima-Sugano J."/>
            <person name="Satoh T."/>
            <person name="Shirai Y."/>
            <person name="Takahashi Y."/>
            <person name="Nakagawa K."/>
            <person name="Okumura K."/>
            <person name="Nagase T."/>
            <person name="Nomura N."/>
            <person name="Kikuchi H."/>
            <person name="Masuho Y."/>
            <person name="Yamashita R."/>
            <person name="Nakai K."/>
            <person name="Yada T."/>
            <person name="Nakamura Y."/>
            <person name="Ohara O."/>
            <person name="Isogai T."/>
            <person name="Sugano S."/>
        </authorList>
    </citation>
    <scope>NUCLEOTIDE SEQUENCE [LARGE SCALE MRNA] (ISOFORMS 1 AND 3)</scope>
    <source>
        <tissue>Brain</tissue>
        <tissue>Testis</tissue>
    </source>
</reference>
<reference key="2">
    <citation type="journal article" date="2006" name="Nature">
        <title>DNA sequence and analysis of human chromosome 8.</title>
        <authorList>
            <person name="Nusbaum C."/>
            <person name="Mikkelsen T.S."/>
            <person name="Zody M.C."/>
            <person name="Asakawa S."/>
            <person name="Taudien S."/>
            <person name="Garber M."/>
            <person name="Kodira C.D."/>
            <person name="Schueler M.G."/>
            <person name="Shimizu A."/>
            <person name="Whittaker C.A."/>
            <person name="Chang J.L."/>
            <person name="Cuomo C.A."/>
            <person name="Dewar K."/>
            <person name="FitzGerald M.G."/>
            <person name="Yang X."/>
            <person name="Allen N.R."/>
            <person name="Anderson S."/>
            <person name="Asakawa T."/>
            <person name="Blechschmidt K."/>
            <person name="Bloom T."/>
            <person name="Borowsky M.L."/>
            <person name="Butler J."/>
            <person name="Cook A."/>
            <person name="Corum B."/>
            <person name="DeArellano K."/>
            <person name="DeCaprio D."/>
            <person name="Dooley K.T."/>
            <person name="Dorris L. III"/>
            <person name="Engels R."/>
            <person name="Gloeckner G."/>
            <person name="Hafez N."/>
            <person name="Hagopian D.S."/>
            <person name="Hall J.L."/>
            <person name="Ishikawa S.K."/>
            <person name="Jaffe D.B."/>
            <person name="Kamat A."/>
            <person name="Kudoh J."/>
            <person name="Lehmann R."/>
            <person name="Lokitsang T."/>
            <person name="Macdonald P."/>
            <person name="Major J.E."/>
            <person name="Matthews C.D."/>
            <person name="Mauceli E."/>
            <person name="Menzel U."/>
            <person name="Mihalev A.H."/>
            <person name="Minoshima S."/>
            <person name="Murayama Y."/>
            <person name="Naylor J.W."/>
            <person name="Nicol R."/>
            <person name="Nguyen C."/>
            <person name="O'Leary S.B."/>
            <person name="O'Neill K."/>
            <person name="Parker S.C.J."/>
            <person name="Polley A."/>
            <person name="Raymond C.K."/>
            <person name="Reichwald K."/>
            <person name="Rodriguez J."/>
            <person name="Sasaki T."/>
            <person name="Schilhabel M."/>
            <person name="Siddiqui R."/>
            <person name="Smith C.L."/>
            <person name="Sneddon T.P."/>
            <person name="Talamas J.A."/>
            <person name="Tenzin P."/>
            <person name="Topham K."/>
            <person name="Venkataraman V."/>
            <person name="Wen G."/>
            <person name="Yamazaki S."/>
            <person name="Young S.K."/>
            <person name="Zeng Q."/>
            <person name="Zimmer A.R."/>
            <person name="Rosenthal A."/>
            <person name="Birren B.W."/>
            <person name="Platzer M."/>
            <person name="Shimizu N."/>
            <person name="Lander E.S."/>
        </authorList>
    </citation>
    <scope>NUCLEOTIDE SEQUENCE [LARGE SCALE GENOMIC DNA]</scope>
</reference>
<reference key="3">
    <citation type="journal article" date="2004" name="Genome Res.">
        <title>The status, quality, and expansion of the NIH full-length cDNA project: the Mammalian Gene Collection (MGC).</title>
        <authorList>
            <consortium name="The MGC Project Team"/>
        </authorList>
    </citation>
    <scope>NUCLEOTIDE SEQUENCE [LARGE SCALE MRNA] (ISOFORM 1)</scope>
    <source>
        <tissue>Testis</tissue>
    </source>
</reference>
<dbReference type="EMBL" id="AK313454">
    <property type="protein sequence ID" value="BAG36241.1"/>
    <property type="status" value="ALT_INIT"/>
    <property type="molecule type" value="mRNA"/>
</dbReference>
<dbReference type="EMBL" id="AK093442">
    <property type="protein sequence ID" value="BAC04166.1"/>
    <property type="molecule type" value="mRNA"/>
</dbReference>
<dbReference type="EMBL" id="AC004908">
    <property type="protein sequence ID" value="AAD05197.1"/>
    <property type="status" value="ALT_SEQ"/>
    <property type="molecule type" value="Genomic_DNA"/>
</dbReference>
<dbReference type="EMBL" id="BC026190">
    <property type="protein sequence ID" value="AAH26190.2"/>
    <property type="molecule type" value="mRNA"/>
</dbReference>
<dbReference type="CCDS" id="CCDS5951.2">
    <molecule id="Q8TC21-1"/>
</dbReference>
<dbReference type="RefSeq" id="NP_001035880.1">
    <molecule id="Q8TC21-1"/>
    <property type="nucleotide sequence ID" value="NM_001042415.3"/>
</dbReference>
<dbReference type="RefSeq" id="NP_001035881.1">
    <molecule id="Q8TC21-1"/>
    <property type="nucleotide sequence ID" value="NM_001042416.3"/>
</dbReference>
<dbReference type="RefSeq" id="NP_001274183.1">
    <molecule id="Q8TC21-1"/>
    <property type="nucleotide sequence ID" value="NM_001287254.2"/>
</dbReference>
<dbReference type="RefSeq" id="NP_001274184.1">
    <molecule id="Q8TC21-1"/>
    <property type="nucleotide sequence ID" value="NM_001287255.1"/>
</dbReference>
<dbReference type="RefSeq" id="NP_001274185.1">
    <molecule id="Q8TC21-1"/>
    <property type="nucleotide sequence ID" value="NM_001287256.1"/>
</dbReference>
<dbReference type="RefSeq" id="NP_001274328.1">
    <property type="nucleotide sequence ID" value="NM_001287399.1"/>
</dbReference>
<dbReference type="RefSeq" id="NP_775810.2">
    <molecule id="Q8TC21-1"/>
    <property type="nucleotide sequence ID" value="NM_173539.3"/>
</dbReference>
<dbReference type="RefSeq" id="XP_016868655.1">
    <property type="nucleotide sequence ID" value="XM_017013166.1"/>
</dbReference>
<dbReference type="RefSeq" id="XP_047277370.1">
    <molecule id="Q8TC21-1"/>
    <property type="nucleotide sequence ID" value="XM_047421414.1"/>
</dbReference>
<dbReference type="RefSeq" id="XP_054215876.1">
    <molecule id="Q8TC21-1"/>
    <property type="nucleotide sequence ID" value="XM_054359901.1"/>
</dbReference>
<dbReference type="SMR" id="Q8TC21"/>
<dbReference type="BioGRID" id="127979">
    <property type="interactions" value="2"/>
</dbReference>
<dbReference type="FunCoup" id="Q8TC21">
    <property type="interactions" value="59"/>
</dbReference>
<dbReference type="IntAct" id="Q8TC21">
    <property type="interactions" value="2"/>
</dbReference>
<dbReference type="STRING" id="9606.ENSP00000381613"/>
<dbReference type="GlyGen" id="Q8TC21">
    <property type="glycosylation" value="1 site, 1 O-linked glycan (1 site)"/>
</dbReference>
<dbReference type="iPTMnet" id="Q8TC21"/>
<dbReference type="PhosphoSitePlus" id="Q8TC21"/>
<dbReference type="BioMuta" id="ZNF596"/>
<dbReference type="DMDM" id="257050982"/>
<dbReference type="jPOST" id="Q8TC21"/>
<dbReference type="MassIVE" id="Q8TC21"/>
<dbReference type="PaxDb" id="9606-ENSP00000381613"/>
<dbReference type="PeptideAtlas" id="Q8TC21"/>
<dbReference type="Antibodypedia" id="7941">
    <property type="antibodies" value="142 antibodies from 27 providers"/>
</dbReference>
<dbReference type="DNASU" id="169270"/>
<dbReference type="Ensembl" id="ENST00000308811.8">
    <molecule id="Q8TC21-1"/>
    <property type="protein sequence ID" value="ENSP00000310033.4"/>
    <property type="gene ID" value="ENSG00000172748.14"/>
</dbReference>
<dbReference type="Ensembl" id="ENST00000320552.6">
    <molecule id="Q8TC21-1"/>
    <property type="protein sequence ID" value="ENSP00000318719.3"/>
    <property type="gene ID" value="ENSG00000172748.14"/>
</dbReference>
<dbReference type="Ensembl" id="ENST00000398612.3">
    <molecule id="Q8TC21-1"/>
    <property type="protein sequence ID" value="ENSP00000381613.1"/>
    <property type="gene ID" value="ENSG00000172748.14"/>
</dbReference>
<dbReference type="GeneID" id="169270"/>
<dbReference type="KEGG" id="hsa:169270"/>
<dbReference type="MANE-Select" id="ENST00000398612.3">
    <property type="protein sequence ID" value="ENSP00000381613.1"/>
    <property type="RefSeq nucleotide sequence ID" value="NM_001042416.3"/>
    <property type="RefSeq protein sequence ID" value="NP_001035881.1"/>
</dbReference>
<dbReference type="UCSC" id="uc003wot.5">
    <molecule id="Q8TC21-1"/>
    <property type="organism name" value="human"/>
</dbReference>
<dbReference type="AGR" id="HGNC:27268"/>
<dbReference type="CTD" id="169270"/>
<dbReference type="DisGeNET" id="169270"/>
<dbReference type="GeneCards" id="ZNF596"/>
<dbReference type="HGNC" id="HGNC:27268">
    <property type="gene designation" value="ZNF596"/>
</dbReference>
<dbReference type="HPA" id="ENSG00000172748">
    <property type="expression patterns" value="Tissue enhanced (retina)"/>
</dbReference>
<dbReference type="neXtProt" id="NX_Q8TC21"/>
<dbReference type="OpenTargets" id="ENSG00000172748"/>
<dbReference type="PharmGKB" id="PA134901402"/>
<dbReference type="VEuPathDB" id="HostDB:ENSG00000172748"/>
<dbReference type="eggNOG" id="KOG1721">
    <property type="taxonomic scope" value="Eukaryota"/>
</dbReference>
<dbReference type="GeneTree" id="ENSGT00940000154559"/>
<dbReference type="HOGENOM" id="CLU_002678_44_18_1"/>
<dbReference type="InParanoid" id="Q8TC21"/>
<dbReference type="OMA" id="MIFMQHI"/>
<dbReference type="OrthoDB" id="9820732at2759"/>
<dbReference type="PAN-GO" id="Q8TC21">
    <property type="GO annotations" value="3 GO annotations based on evolutionary models"/>
</dbReference>
<dbReference type="PhylomeDB" id="Q8TC21"/>
<dbReference type="TreeFam" id="TF338497"/>
<dbReference type="PathwayCommons" id="Q8TC21"/>
<dbReference type="Reactome" id="R-HSA-212436">
    <property type="pathway name" value="Generic Transcription Pathway"/>
</dbReference>
<dbReference type="SignaLink" id="Q8TC21"/>
<dbReference type="BioGRID-ORCS" id="169270">
    <property type="hits" value="21 hits in 1170 CRISPR screens"/>
</dbReference>
<dbReference type="ChiTaRS" id="ZNF596">
    <property type="organism name" value="human"/>
</dbReference>
<dbReference type="GenomeRNAi" id="169270"/>
<dbReference type="Pharos" id="Q8TC21">
    <property type="development level" value="Tdark"/>
</dbReference>
<dbReference type="PRO" id="PR:Q8TC21"/>
<dbReference type="Proteomes" id="UP000005640">
    <property type="component" value="Chromosome 8"/>
</dbReference>
<dbReference type="RNAct" id="Q8TC21">
    <property type="molecule type" value="protein"/>
</dbReference>
<dbReference type="Bgee" id="ENSG00000172748">
    <property type="expression patterns" value="Expressed in right hemisphere of cerebellum and 102 other cell types or tissues"/>
</dbReference>
<dbReference type="ExpressionAtlas" id="Q8TC21">
    <property type="expression patterns" value="baseline and differential"/>
</dbReference>
<dbReference type="GO" id="GO:0005634">
    <property type="term" value="C:nucleus"/>
    <property type="evidence" value="ECO:0000318"/>
    <property type="project" value="GO_Central"/>
</dbReference>
<dbReference type="GO" id="GO:0000981">
    <property type="term" value="F:DNA-binding transcription factor activity, RNA polymerase II-specific"/>
    <property type="evidence" value="ECO:0000318"/>
    <property type="project" value="GO_Central"/>
</dbReference>
<dbReference type="GO" id="GO:0000977">
    <property type="term" value="F:RNA polymerase II transcription regulatory region sequence-specific DNA binding"/>
    <property type="evidence" value="ECO:0000318"/>
    <property type="project" value="GO_Central"/>
</dbReference>
<dbReference type="GO" id="GO:0008270">
    <property type="term" value="F:zinc ion binding"/>
    <property type="evidence" value="ECO:0007669"/>
    <property type="project" value="UniProtKB-KW"/>
</dbReference>
<dbReference type="GO" id="GO:0006357">
    <property type="term" value="P:regulation of transcription by RNA polymerase II"/>
    <property type="evidence" value="ECO:0000318"/>
    <property type="project" value="GO_Central"/>
</dbReference>
<dbReference type="CDD" id="cd07765">
    <property type="entry name" value="KRAB_A-box"/>
    <property type="match status" value="1"/>
</dbReference>
<dbReference type="FunFam" id="3.30.160.60:FF:000240">
    <property type="entry name" value="Zinc finger protein 250"/>
    <property type="match status" value="1"/>
</dbReference>
<dbReference type="FunFam" id="3.30.160.60:FF:001498">
    <property type="entry name" value="Zinc finger protein 404"/>
    <property type="match status" value="1"/>
</dbReference>
<dbReference type="FunFam" id="3.30.160.60:FF:001647">
    <property type="entry name" value="Zinc finger protein 596"/>
    <property type="match status" value="2"/>
</dbReference>
<dbReference type="FunFam" id="3.30.160.60:FF:000430">
    <property type="entry name" value="zinc finger protein 596 isoform X1"/>
    <property type="match status" value="3"/>
</dbReference>
<dbReference type="FunFam" id="3.30.160.60:FF:000830">
    <property type="entry name" value="zinc finger protein 596 isoform X1"/>
    <property type="match status" value="1"/>
</dbReference>
<dbReference type="FunFam" id="3.30.160.60:FF:001740">
    <property type="entry name" value="zinc finger protein 596 isoform X1"/>
    <property type="match status" value="1"/>
</dbReference>
<dbReference type="FunFam" id="3.30.160.60:FF:002250">
    <property type="entry name" value="zinc finger protein 596 isoform X1"/>
    <property type="match status" value="1"/>
</dbReference>
<dbReference type="FunFam" id="3.30.160.60:FF:002015">
    <property type="entry name" value="ZNF596 isoform 2"/>
    <property type="match status" value="1"/>
</dbReference>
<dbReference type="Gene3D" id="6.10.140.140">
    <property type="match status" value="1"/>
</dbReference>
<dbReference type="Gene3D" id="3.30.160.60">
    <property type="entry name" value="Classic Zinc Finger"/>
    <property type="match status" value="12"/>
</dbReference>
<dbReference type="InterPro" id="IPR001909">
    <property type="entry name" value="KRAB"/>
</dbReference>
<dbReference type="InterPro" id="IPR036051">
    <property type="entry name" value="KRAB_dom_sf"/>
</dbReference>
<dbReference type="InterPro" id="IPR050331">
    <property type="entry name" value="Zinc_finger"/>
</dbReference>
<dbReference type="InterPro" id="IPR036236">
    <property type="entry name" value="Znf_C2H2_sf"/>
</dbReference>
<dbReference type="InterPro" id="IPR013087">
    <property type="entry name" value="Znf_C2H2_type"/>
</dbReference>
<dbReference type="PANTHER" id="PTHR16515">
    <property type="entry name" value="PR DOMAIN ZINC FINGER PROTEIN"/>
    <property type="match status" value="1"/>
</dbReference>
<dbReference type="PANTHER" id="PTHR16515:SF67">
    <property type="entry name" value="ZINC FINGER PROTEIN 936"/>
    <property type="match status" value="1"/>
</dbReference>
<dbReference type="Pfam" id="PF01352">
    <property type="entry name" value="KRAB"/>
    <property type="match status" value="1"/>
</dbReference>
<dbReference type="Pfam" id="PF00096">
    <property type="entry name" value="zf-C2H2"/>
    <property type="match status" value="7"/>
</dbReference>
<dbReference type="Pfam" id="PF13465">
    <property type="entry name" value="zf-H2C2_2"/>
    <property type="match status" value="2"/>
</dbReference>
<dbReference type="SMART" id="SM00349">
    <property type="entry name" value="KRAB"/>
    <property type="match status" value="1"/>
</dbReference>
<dbReference type="SMART" id="SM00355">
    <property type="entry name" value="ZnF_C2H2"/>
    <property type="match status" value="11"/>
</dbReference>
<dbReference type="SUPFAM" id="SSF57667">
    <property type="entry name" value="beta-beta-alpha zinc fingers"/>
    <property type="match status" value="8"/>
</dbReference>
<dbReference type="SUPFAM" id="SSF109640">
    <property type="entry name" value="KRAB domain (Kruppel-associated box)"/>
    <property type="match status" value="1"/>
</dbReference>
<dbReference type="PROSITE" id="PS50805">
    <property type="entry name" value="KRAB"/>
    <property type="match status" value="1"/>
</dbReference>
<dbReference type="PROSITE" id="PS00028">
    <property type="entry name" value="ZINC_FINGER_C2H2_1"/>
    <property type="match status" value="11"/>
</dbReference>
<dbReference type="PROSITE" id="PS50157">
    <property type="entry name" value="ZINC_FINGER_C2H2_2"/>
    <property type="match status" value="11"/>
</dbReference>
<organism>
    <name type="scientific">Homo sapiens</name>
    <name type="common">Human</name>
    <dbReference type="NCBI Taxonomy" id="9606"/>
    <lineage>
        <taxon>Eukaryota</taxon>
        <taxon>Metazoa</taxon>
        <taxon>Chordata</taxon>
        <taxon>Craniata</taxon>
        <taxon>Vertebrata</taxon>
        <taxon>Euteleostomi</taxon>
        <taxon>Mammalia</taxon>
        <taxon>Eutheria</taxon>
        <taxon>Euarchontoglires</taxon>
        <taxon>Primates</taxon>
        <taxon>Haplorrhini</taxon>
        <taxon>Catarrhini</taxon>
        <taxon>Hominidae</taxon>
        <taxon>Homo</taxon>
    </lineage>
</organism>
<accession>Q8TC21</accession>
<accession>B2R8P4</accession>
<accession>O95015</accession>
<accession>Q8N9X0</accession>
<protein>
    <recommendedName>
        <fullName>Zinc finger protein 596</fullName>
    </recommendedName>
</protein>
<keyword id="KW-0025">Alternative splicing</keyword>
<keyword id="KW-0238">DNA-binding</keyword>
<keyword id="KW-0479">Metal-binding</keyword>
<keyword id="KW-0539">Nucleus</keyword>
<keyword id="KW-1267">Proteomics identification</keyword>
<keyword id="KW-1185">Reference proteome</keyword>
<keyword id="KW-0677">Repeat</keyword>
<keyword id="KW-0804">Transcription</keyword>
<keyword id="KW-0805">Transcription regulation</keyword>
<keyword id="KW-0862">Zinc</keyword>
<keyword id="KW-0863">Zinc-finger</keyword>
<feature type="chain" id="PRO_0000245849" description="Zinc finger protein 596">
    <location>
        <begin position="1"/>
        <end position="504"/>
    </location>
</feature>
<feature type="domain" description="KRAB" evidence="2">
    <location>
        <begin position="7"/>
        <end position="78"/>
    </location>
</feature>
<feature type="zinc finger region" description="C2H2-type 1" evidence="1">
    <location>
        <begin position="195"/>
        <end position="217"/>
    </location>
</feature>
<feature type="zinc finger region" description="C2H2-type 2" evidence="1">
    <location>
        <begin position="223"/>
        <end position="245"/>
    </location>
</feature>
<feature type="zinc finger region" description="C2H2-type 3" evidence="1">
    <location>
        <begin position="251"/>
        <end position="273"/>
    </location>
</feature>
<feature type="zinc finger region" description="C2H2-type 4" evidence="1">
    <location>
        <begin position="279"/>
        <end position="301"/>
    </location>
</feature>
<feature type="zinc finger region" description="C2H2-type 5" evidence="1">
    <location>
        <begin position="307"/>
        <end position="329"/>
    </location>
</feature>
<feature type="zinc finger region" description="C2H2-type 6" evidence="1">
    <location>
        <begin position="335"/>
        <end position="357"/>
    </location>
</feature>
<feature type="zinc finger region" description="C2H2-type 7" evidence="1">
    <location>
        <begin position="363"/>
        <end position="385"/>
    </location>
</feature>
<feature type="zinc finger region" description="C2H2-type 8" evidence="1">
    <location>
        <begin position="391"/>
        <end position="413"/>
    </location>
</feature>
<feature type="zinc finger region" description="C2H2-type 9" evidence="1">
    <location>
        <begin position="419"/>
        <end position="441"/>
    </location>
</feature>
<feature type="zinc finger region" description="C2H2-type 10" evidence="1">
    <location>
        <begin position="447"/>
        <end position="469"/>
    </location>
</feature>
<feature type="zinc finger region" description="C2H2-type 11" evidence="1">
    <location>
        <begin position="475"/>
        <end position="497"/>
    </location>
</feature>
<feature type="splice variant" id="VSP_019801" description="In isoform 3." evidence="3">
    <location>
        <begin position="1"/>
        <end position="101"/>
    </location>
</feature>
<feature type="splice variant" id="VSP_019802" description="In isoform 2." evidence="4">
    <location>
        <begin position="48"/>
        <end position="117"/>
    </location>
</feature>
<feature type="splice variant" id="VSP_019803" description="In isoform 3." evidence="3">
    <original>CSDLRK</original>
    <variation>LIIVNT</variation>
    <location>
        <begin position="235"/>
        <end position="240"/>
    </location>
</feature>
<feature type="splice variant" id="VSP_019804" description="In isoform 3." evidence="3">
    <location>
        <begin position="241"/>
        <end position="504"/>
    </location>
</feature>
<feature type="sequence variant" id="VAR_027014" description="In dbSNP:rs2074718.">
    <original>T</original>
    <variation>K</variation>
    <location>
        <position position="136"/>
    </location>
</feature>
<feature type="sequence variant" id="VAR_027015" description="In dbSNP:rs2072174.">
    <original>V</original>
    <variation>G</variation>
    <location>
        <position position="476"/>
    </location>
</feature>
<feature type="sequence conflict" description="In Ref. 3; AAH26190." evidence="4" ref="3">
    <original>Q</original>
    <variation>H</variation>
    <location>
        <position position="89"/>
    </location>
</feature>
<gene>
    <name type="primary">ZNF596</name>
</gene>
<proteinExistence type="evidence at protein level"/>
<sequence>MPSPDSMTFEDIIVDFTQEEWALLDTSQRKLFQDVMLENISHLVSIGKQLCKSVVLSQLEQVEKLSTQRISLLQGREVGIKHQEIPFIQHIYQKGTSTISTMRSHTQEDPFLCNDLGEDFTQHIALTQNVITYMRTKHFVSKKFGKIFSDWLSFNQHKEIHTKCKSYGSHLFDYAFIQNSALRPHSVTHTREITLECRVCGKTFSKNSNLRRHEMIHTGEKPHGCHLCGKAFTHCSDLRKHERTHTGEKPYGCHLCGKAFSKSSNLRRHEMIHTREKAQICHLCGKAFTHCSDLRKHERTHLGDKPYGCLLCGKAFSKCSYLRQHERTHNGEKPYECHLCGKAFSHCSHLRQHERSHNGEKPHGCHLCGKAFTESSVLKRHERIHTGEKPYECHVCGKAFTESSDLRRHERTHTGEKPYECHLCGKAFNHSSVLRRHERTHTGEKPYECNICGKAFNRSYNFRLHRRVHTGEKPYVCPLCGKAFSKFFNLRQHERTHTKKAMNM</sequence>
<evidence type="ECO:0000255" key="1">
    <source>
        <dbReference type="PROSITE-ProRule" id="PRU00042"/>
    </source>
</evidence>
<evidence type="ECO:0000255" key="2">
    <source>
        <dbReference type="PROSITE-ProRule" id="PRU00119"/>
    </source>
</evidence>
<evidence type="ECO:0000303" key="3">
    <source>
    </source>
</evidence>
<evidence type="ECO:0000305" key="4"/>